<keyword id="KW-0051">Antiviral defense</keyword>
<keyword id="KW-0067">ATP-binding</keyword>
<keyword id="KW-0347">Helicase</keyword>
<keyword id="KW-0378">Hydrolase</keyword>
<keyword id="KW-0460">Magnesium</keyword>
<keyword id="KW-0479">Metal-binding</keyword>
<keyword id="KW-0540">Nuclease</keyword>
<keyword id="KW-0547">Nucleotide-binding</keyword>
<keyword id="KW-1185">Reference proteome</keyword>
<protein>
    <recommendedName>
        <fullName>Putative CRISPR-associated nuclease/helicase Cas3</fullName>
        <ecNumber>3.1.-.-</ecNumber>
        <ecNumber>3.6.4.-</ecNumber>
    </recommendedName>
</protein>
<gene>
    <name type="primary">cas3</name>
    <name type="ordered locus">MXAN_7264</name>
</gene>
<proteinExistence type="evidence at transcript level"/>
<accession>Q1CW46</accession>
<reference key="1">
    <citation type="journal article" date="2006" name="Proc. Natl. Acad. Sci. U.S.A.">
        <title>Evolution of sensory complexity recorded in a myxobacterial genome.</title>
        <authorList>
            <person name="Goldman B.S."/>
            <person name="Nierman W.C."/>
            <person name="Kaiser D."/>
            <person name="Slater S.C."/>
            <person name="Durkin A.S."/>
            <person name="Eisen J.A."/>
            <person name="Ronning C.M."/>
            <person name="Barbazuk W.B."/>
            <person name="Blanchard M."/>
            <person name="Field C."/>
            <person name="Halling C."/>
            <person name="Hinkle G."/>
            <person name="Iartchuk O."/>
            <person name="Kim H.S."/>
            <person name="Mackenzie C."/>
            <person name="Madupu R."/>
            <person name="Miller N."/>
            <person name="Shvartsbeyn A."/>
            <person name="Sullivan S.A."/>
            <person name="Vaudin M."/>
            <person name="Wiegand R."/>
            <person name="Kaplan H.B."/>
        </authorList>
    </citation>
    <scope>NUCLEOTIDE SEQUENCE [LARGE SCALE GENOMIC DNA]</scope>
    <source>
        <strain>DK1622</strain>
    </source>
</reference>
<reference key="2">
    <citation type="journal article" date="2007" name="J. Bacteriol.">
        <title>Regulation of dev, an operon that includes genes essential for Myxococcus xanthus development and CRISPR-associated genes and repeats.</title>
        <authorList>
            <person name="Viswanathan P."/>
            <person name="Murphy K."/>
            <person name="Julien B."/>
            <person name="Garza A.G."/>
            <person name="Kroos L."/>
        </authorList>
    </citation>
    <scope>DEVELOPMENTAL STAGE</scope>
    <scope>INDUCTION</scope>
    <scope>OPERON STRUCTURE</scope>
    <source>
        <strain>DK1622</strain>
    </source>
</reference>
<comment type="function">
    <text evidence="1">CRISPR (clustered regularly interspaced short palindromic repeat), is an adaptive immune system that provides protection against mobile genetic elements (viruses, transposable elements and conjugative plasmids). CRISPR clusters contain sequences complementary to antecedent mobile elements and target invading nucleic acids. CRISPR clusters are transcribed and processed into CRISPR RNA (crRNA). This protein plus Cascade participate in CRISPR interference, the third stage of CRISPR immunity.</text>
</comment>
<comment type="cofactor">
    <cofactor evidence="2">
        <name>Mg(2+)</name>
        <dbReference type="ChEBI" id="CHEBI:18420"/>
    </cofactor>
</comment>
<comment type="developmental stage">
    <text evidence="4">Operon expression begins by 6 hours after starvation has initiated development and is under strong negative regulation by DevS.</text>
</comment>
<comment type="induction">
    <text evidence="4">Part of an operon going from at least MXAN_7266 to MXAN_7259 that includes a CRISPR operon with transcription continuing into the pre-crRNA locus.</text>
</comment>
<comment type="similarity">
    <text evidence="5">In the N-terminal section; belongs to the CRISPR-associated nuclease Cas3-HD family.</text>
</comment>
<comment type="similarity">
    <text evidence="5">In the central section; belongs to the CRISPR-associated helicase Cas3 family.</text>
</comment>
<sequence>MKRLLAKSTATPDRPEGEATLLGHTALVLSAARRLLEHRGRASLLAAGLDPALEPRLRRIVLLAAALHDLGKCSEHFQSMLRRQREAPQLVRHEALSLWLCWPGQPLSAWLQRDVSELDLCLALVCVAAHHRKFQTEAFAPDGTGAGLSLELRVQHEDFARTLGRIAEELALSAPPLFTAPIVLRATRKEHPRDQLQSWQDDFERTVPAGSVDARLLAVCKALVLAADVAGSALPRSGEKQDWVDRQLTAPHPAEALRAVVERRLAGHTPRPFQEEVARSAAPLTLVRAGCGSGKTAAAYLWAARQHPGRPLWLTYPTMGTATEGFRDYLHGADVEARLQHSRAEVDFDIFGLRDGAAPGTSSRDQDRLDALRSWGADAMSCTADTVLGLVQSQRQGLYAWPGLCAACVVFDEVHAYDDRLFGCLLRFLEALPGIPALLMTASLPATRLDVLRGMCERVHGRSLAEVEGPEDLETLPRYQRLDVAEPWALVAECLRDHGKVLWVSNTVDRCMRTAEAGTSHGARALLYHSRFRYEDRVRRHGDVIEAFATEGRAAFASTTQVAEMSLDLSADLLVTDLAPIPALIQRLGRLNRRSTLERPAPVRPFVVLPFDGPPYAAPDLRDARAWMERLGTGPLSQRDLVDAWGPPGMMDAPRRQSSTWLDGRFDTWPAPCRDGSPSLTVLLEEDARAVLDGAVSAHRVTLPMNLPPESFKWRAWPRAGRLPYPIPPANALDYDGLRGARWRKP</sequence>
<name>CAS3_MYXXD</name>
<evidence type="ECO:0000250" key="1">
    <source>
        <dbReference type="UniProtKB" id="P38036"/>
    </source>
</evidence>
<evidence type="ECO:0000250" key="2">
    <source>
        <dbReference type="UniProtKB" id="Q53VY2"/>
    </source>
</evidence>
<evidence type="ECO:0000255" key="3">
    <source>
        <dbReference type="PROSITE-ProRule" id="PRU00974"/>
    </source>
</evidence>
<evidence type="ECO:0000269" key="4">
    <source>
    </source>
</evidence>
<evidence type="ECO:0000305" key="5"/>
<organism>
    <name type="scientific">Myxococcus xanthus (strain DK1622)</name>
    <dbReference type="NCBI Taxonomy" id="246197"/>
    <lineage>
        <taxon>Bacteria</taxon>
        <taxon>Pseudomonadati</taxon>
        <taxon>Myxococcota</taxon>
        <taxon>Myxococcia</taxon>
        <taxon>Myxococcales</taxon>
        <taxon>Cystobacterineae</taxon>
        <taxon>Myxococcaceae</taxon>
        <taxon>Myxococcus</taxon>
    </lineage>
</organism>
<feature type="chain" id="PRO_0000418221" description="Putative CRISPR-associated nuclease/helicase Cas3">
    <location>
        <begin position="1"/>
        <end position="746"/>
    </location>
</feature>
<feature type="domain" description="HD Cas3-type" evidence="3">
    <location>
        <begin position="14"/>
        <end position="230"/>
    </location>
</feature>
<feature type="short sequence motif" description="DEAH box">
    <location>
        <begin position="412"/>
        <end position="415"/>
    </location>
</feature>
<feature type="binding site" evidence="2">
    <location>
        <position position="69"/>
    </location>
    <ligand>
        <name>Mg(2+)</name>
        <dbReference type="ChEBI" id="CHEBI:18420"/>
    </ligand>
</feature>
<feature type="binding site" evidence="2">
    <location>
        <position position="131"/>
    </location>
    <ligand>
        <name>Mg(2+)</name>
        <dbReference type="ChEBI" id="CHEBI:18420"/>
    </ligand>
</feature>
<dbReference type="EC" id="3.1.-.-"/>
<dbReference type="EC" id="3.6.4.-"/>
<dbReference type="EMBL" id="CP000113">
    <property type="protein sequence ID" value="ABF91789.1"/>
    <property type="molecule type" value="Genomic_DNA"/>
</dbReference>
<dbReference type="RefSeq" id="WP_011557183.1">
    <property type="nucleotide sequence ID" value="NC_008095.1"/>
</dbReference>
<dbReference type="SMR" id="Q1CW46"/>
<dbReference type="STRING" id="246197.MXAN_7264"/>
<dbReference type="EnsemblBacteria" id="ABF91789">
    <property type="protein sequence ID" value="ABF91789"/>
    <property type="gene ID" value="MXAN_7264"/>
</dbReference>
<dbReference type="GeneID" id="41364430"/>
<dbReference type="KEGG" id="mxa:MXAN_7264"/>
<dbReference type="eggNOG" id="COG1203">
    <property type="taxonomic scope" value="Bacteria"/>
</dbReference>
<dbReference type="HOGENOM" id="CLU_013108_0_0_7"/>
<dbReference type="OrthoDB" id="9810236at2"/>
<dbReference type="Proteomes" id="UP000002402">
    <property type="component" value="Chromosome"/>
</dbReference>
<dbReference type="GO" id="GO:0005829">
    <property type="term" value="C:cytosol"/>
    <property type="evidence" value="ECO:0007669"/>
    <property type="project" value="TreeGrafter"/>
</dbReference>
<dbReference type="GO" id="GO:0005524">
    <property type="term" value="F:ATP binding"/>
    <property type="evidence" value="ECO:0007669"/>
    <property type="project" value="UniProtKB-KW"/>
</dbReference>
<dbReference type="GO" id="GO:0046872">
    <property type="term" value="F:metal ion binding"/>
    <property type="evidence" value="ECO:0007669"/>
    <property type="project" value="UniProtKB-KW"/>
</dbReference>
<dbReference type="GO" id="GO:0004518">
    <property type="term" value="F:nuclease activity"/>
    <property type="evidence" value="ECO:0007669"/>
    <property type="project" value="UniProtKB-KW"/>
</dbReference>
<dbReference type="GO" id="GO:0003724">
    <property type="term" value="F:RNA helicase activity"/>
    <property type="evidence" value="ECO:0007669"/>
    <property type="project" value="TreeGrafter"/>
</dbReference>
<dbReference type="GO" id="GO:0051607">
    <property type="term" value="P:defense response to virus"/>
    <property type="evidence" value="ECO:0007669"/>
    <property type="project" value="UniProtKB-KW"/>
</dbReference>
<dbReference type="CDD" id="cd09641">
    <property type="entry name" value="Cas3''_I"/>
    <property type="match status" value="1"/>
</dbReference>
<dbReference type="CDD" id="cd17930">
    <property type="entry name" value="DEXHc_cas3"/>
    <property type="match status" value="1"/>
</dbReference>
<dbReference type="Gene3D" id="1.10.3210.30">
    <property type="match status" value="1"/>
</dbReference>
<dbReference type="Gene3D" id="3.40.50.300">
    <property type="entry name" value="P-loop containing nucleotide triphosphate hydrolases"/>
    <property type="match status" value="2"/>
</dbReference>
<dbReference type="InterPro" id="IPR054712">
    <property type="entry name" value="Cas3-like_dom"/>
</dbReference>
<dbReference type="InterPro" id="IPR006483">
    <property type="entry name" value="CRISPR-assoc_Cas3_HD"/>
</dbReference>
<dbReference type="InterPro" id="IPR038257">
    <property type="entry name" value="CRISPR-assoc_Cas3_HD_sf"/>
</dbReference>
<dbReference type="InterPro" id="IPR050079">
    <property type="entry name" value="DEAD_box_RNA_helicase"/>
</dbReference>
<dbReference type="InterPro" id="IPR006474">
    <property type="entry name" value="Helicase_Cas3_CRISPR-ass_core"/>
</dbReference>
<dbReference type="InterPro" id="IPR027417">
    <property type="entry name" value="P-loop_NTPase"/>
</dbReference>
<dbReference type="NCBIfam" id="TIGR01587">
    <property type="entry name" value="cas3_core"/>
    <property type="match status" value="1"/>
</dbReference>
<dbReference type="NCBIfam" id="TIGR01596">
    <property type="entry name" value="cas3_HD"/>
    <property type="match status" value="1"/>
</dbReference>
<dbReference type="PANTHER" id="PTHR47959">
    <property type="entry name" value="ATP-DEPENDENT RNA HELICASE RHLE-RELATED"/>
    <property type="match status" value="1"/>
</dbReference>
<dbReference type="PANTHER" id="PTHR47959:SF16">
    <property type="entry name" value="CRISPR-ASSOCIATED NUCLEASE_HELICASE CAS3-RELATED"/>
    <property type="match status" value="1"/>
</dbReference>
<dbReference type="Pfam" id="PF22590">
    <property type="entry name" value="Cas3-like_C_2"/>
    <property type="match status" value="1"/>
</dbReference>
<dbReference type="Pfam" id="PF18019">
    <property type="entry name" value="Cas3_HD"/>
    <property type="match status" value="1"/>
</dbReference>
<dbReference type="SUPFAM" id="SSF52540">
    <property type="entry name" value="P-loop containing nucleoside triphosphate hydrolases"/>
    <property type="match status" value="1"/>
</dbReference>
<dbReference type="PROSITE" id="PS51643">
    <property type="entry name" value="HD_CAS3"/>
    <property type="match status" value="1"/>
</dbReference>